<keyword id="KW-1185">Reference proteome</keyword>
<keyword id="KW-0687">Ribonucleoprotein</keyword>
<keyword id="KW-0689">Ribosomal protein</keyword>
<keyword id="KW-0694">RNA-binding</keyword>
<keyword id="KW-0699">rRNA-binding</keyword>
<comment type="function">
    <text evidence="1">One of the primary rRNA binding proteins, this protein initially binds near the 5'-end of the 23S rRNA. It is important during the early stages of 50S assembly. It makes multiple contacts with different domains of the 23S rRNA in the assembled 50S subunit and ribosome.</text>
</comment>
<comment type="function">
    <text evidence="1">Forms part of the polypeptide exit tunnel.</text>
</comment>
<comment type="subunit">
    <text evidence="1">Part of the 50S ribosomal subunit.</text>
</comment>
<comment type="similarity">
    <text evidence="1">Belongs to the universal ribosomal protein uL4 family.</text>
</comment>
<evidence type="ECO:0000255" key="1">
    <source>
        <dbReference type="HAMAP-Rule" id="MF_01328"/>
    </source>
</evidence>
<evidence type="ECO:0000305" key="2"/>
<reference key="1">
    <citation type="journal article" date="2007" name="J. Bacteriol.">
        <title>The complete genome sequence of Roseobacter denitrificans reveals a mixotrophic rather than photosynthetic metabolism.</title>
        <authorList>
            <person name="Swingley W.D."/>
            <person name="Sadekar S."/>
            <person name="Mastrian S.D."/>
            <person name="Matthies H.J."/>
            <person name="Hao J."/>
            <person name="Ramos H."/>
            <person name="Acharya C.R."/>
            <person name="Conrad A.L."/>
            <person name="Taylor H.L."/>
            <person name="Dejesa L.C."/>
            <person name="Shah M.K."/>
            <person name="O'Huallachain M.E."/>
            <person name="Lince M.T."/>
            <person name="Blankenship R.E."/>
            <person name="Beatty J.T."/>
            <person name="Touchman J.W."/>
        </authorList>
    </citation>
    <scope>NUCLEOTIDE SEQUENCE [LARGE SCALE GENOMIC DNA]</scope>
    <source>
        <strain>ATCC 33942 / OCh 114</strain>
    </source>
</reference>
<proteinExistence type="inferred from homology"/>
<dbReference type="EMBL" id="CP000362">
    <property type="protein sequence ID" value="ABG31040.1"/>
    <property type="molecule type" value="Genomic_DNA"/>
</dbReference>
<dbReference type="RefSeq" id="WP_011567660.1">
    <property type="nucleotide sequence ID" value="NC_008209.1"/>
</dbReference>
<dbReference type="SMR" id="Q16AF3"/>
<dbReference type="STRING" id="375451.RD1_1400"/>
<dbReference type="KEGG" id="rde:RD1_1400"/>
<dbReference type="eggNOG" id="COG0088">
    <property type="taxonomic scope" value="Bacteria"/>
</dbReference>
<dbReference type="HOGENOM" id="CLU_041575_5_1_5"/>
<dbReference type="OrthoDB" id="9803201at2"/>
<dbReference type="Proteomes" id="UP000007029">
    <property type="component" value="Chromosome"/>
</dbReference>
<dbReference type="GO" id="GO:1990904">
    <property type="term" value="C:ribonucleoprotein complex"/>
    <property type="evidence" value="ECO:0007669"/>
    <property type="project" value="UniProtKB-KW"/>
</dbReference>
<dbReference type="GO" id="GO:0005840">
    <property type="term" value="C:ribosome"/>
    <property type="evidence" value="ECO:0007669"/>
    <property type="project" value="UniProtKB-KW"/>
</dbReference>
<dbReference type="GO" id="GO:0019843">
    <property type="term" value="F:rRNA binding"/>
    <property type="evidence" value="ECO:0007669"/>
    <property type="project" value="UniProtKB-UniRule"/>
</dbReference>
<dbReference type="GO" id="GO:0003735">
    <property type="term" value="F:structural constituent of ribosome"/>
    <property type="evidence" value="ECO:0007669"/>
    <property type="project" value="InterPro"/>
</dbReference>
<dbReference type="GO" id="GO:0006412">
    <property type="term" value="P:translation"/>
    <property type="evidence" value="ECO:0007669"/>
    <property type="project" value="UniProtKB-UniRule"/>
</dbReference>
<dbReference type="Gene3D" id="3.40.1370.10">
    <property type="match status" value="1"/>
</dbReference>
<dbReference type="HAMAP" id="MF_01328_B">
    <property type="entry name" value="Ribosomal_uL4_B"/>
    <property type="match status" value="1"/>
</dbReference>
<dbReference type="InterPro" id="IPR002136">
    <property type="entry name" value="Ribosomal_uL4"/>
</dbReference>
<dbReference type="InterPro" id="IPR013005">
    <property type="entry name" value="Ribosomal_uL4-like"/>
</dbReference>
<dbReference type="InterPro" id="IPR023574">
    <property type="entry name" value="Ribosomal_uL4_dom_sf"/>
</dbReference>
<dbReference type="NCBIfam" id="TIGR03953">
    <property type="entry name" value="rplD_bact"/>
    <property type="match status" value="1"/>
</dbReference>
<dbReference type="PANTHER" id="PTHR10746">
    <property type="entry name" value="50S RIBOSOMAL PROTEIN L4"/>
    <property type="match status" value="1"/>
</dbReference>
<dbReference type="PANTHER" id="PTHR10746:SF6">
    <property type="entry name" value="LARGE RIBOSOMAL SUBUNIT PROTEIN UL4M"/>
    <property type="match status" value="1"/>
</dbReference>
<dbReference type="Pfam" id="PF00573">
    <property type="entry name" value="Ribosomal_L4"/>
    <property type="match status" value="1"/>
</dbReference>
<dbReference type="SUPFAM" id="SSF52166">
    <property type="entry name" value="Ribosomal protein L4"/>
    <property type="match status" value="1"/>
</dbReference>
<organism>
    <name type="scientific">Roseobacter denitrificans (strain ATCC 33942 / OCh 114)</name>
    <name type="common">Erythrobacter sp. (strain OCh 114)</name>
    <name type="synonym">Roseobacter denitrificans</name>
    <dbReference type="NCBI Taxonomy" id="375451"/>
    <lineage>
        <taxon>Bacteria</taxon>
        <taxon>Pseudomonadati</taxon>
        <taxon>Pseudomonadota</taxon>
        <taxon>Alphaproteobacteria</taxon>
        <taxon>Rhodobacterales</taxon>
        <taxon>Roseobacteraceae</taxon>
        <taxon>Roseobacter</taxon>
    </lineage>
</organism>
<name>RL4_ROSDO</name>
<protein>
    <recommendedName>
        <fullName evidence="1">Large ribosomal subunit protein uL4</fullName>
    </recommendedName>
    <alternativeName>
        <fullName evidence="2">50S ribosomal protein L4</fullName>
    </alternativeName>
</protein>
<accession>Q16AF3</accession>
<feature type="chain" id="PRO_1000052487" description="Large ribosomal subunit protein uL4">
    <location>
        <begin position="1"/>
        <end position="205"/>
    </location>
</feature>
<sequence>MKLDVIKLDGAKAGSVDLDEALFGLEPRADILHRVVRWQRNNAQAGTHKVKTRSEVNYSTKKIYRQKGTGGARHGARSAPIFRGGGVYKGPKVRSHGHELTKKFRKLGLCHALSAKMKAGELVIIDEVSSDGKTAALAKQVANLGWKRALIIDGATVNETFAQAARNIDGLDILPTMGANVYDILKRDTLVITKAGVEALEARLK</sequence>
<gene>
    <name evidence="1" type="primary">rplD</name>
    <name type="ordered locus">RD1_1400</name>
</gene>